<dbReference type="EMBL" id="CP000749">
    <property type="protein sequence ID" value="ABR73162.1"/>
    <property type="molecule type" value="Genomic_DNA"/>
</dbReference>
<dbReference type="SMR" id="A6W383"/>
<dbReference type="STRING" id="400668.Mmwyl1_4267"/>
<dbReference type="KEGG" id="mmw:Mmwyl1_4267"/>
<dbReference type="eggNOG" id="COG0186">
    <property type="taxonomic scope" value="Bacteria"/>
</dbReference>
<dbReference type="HOGENOM" id="CLU_073626_1_1_6"/>
<dbReference type="OrthoDB" id="9811714at2"/>
<dbReference type="GO" id="GO:0022627">
    <property type="term" value="C:cytosolic small ribosomal subunit"/>
    <property type="evidence" value="ECO:0007669"/>
    <property type="project" value="TreeGrafter"/>
</dbReference>
<dbReference type="GO" id="GO:0019843">
    <property type="term" value="F:rRNA binding"/>
    <property type="evidence" value="ECO:0007669"/>
    <property type="project" value="UniProtKB-UniRule"/>
</dbReference>
<dbReference type="GO" id="GO:0003735">
    <property type="term" value="F:structural constituent of ribosome"/>
    <property type="evidence" value="ECO:0007669"/>
    <property type="project" value="InterPro"/>
</dbReference>
<dbReference type="GO" id="GO:0006412">
    <property type="term" value="P:translation"/>
    <property type="evidence" value="ECO:0007669"/>
    <property type="project" value="UniProtKB-UniRule"/>
</dbReference>
<dbReference type="CDD" id="cd00364">
    <property type="entry name" value="Ribosomal_uS17"/>
    <property type="match status" value="1"/>
</dbReference>
<dbReference type="Gene3D" id="2.40.50.140">
    <property type="entry name" value="Nucleic acid-binding proteins"/>
    <property type="match status" value="1"/>
</dbReference>
<dbReference type="HAMAP" id="MF_01345_B">
    <property type="entry name" value="Ribosomal_uS17_B"/>
    <property type="match status" value="1"/>
</dbReference>
<dbReference type="InterPro" id="IPR012340">
    <property type="entry name" value="NA-bd_OB-fold"/>
</dbReference>
<dbReference type="InterPro" id="IPR000266">
    <property type="entry name" value="Ribosomal_uS17"/>
</dbReference>
<dbReference type="InterPro" id="IPR019984">
    <property type="entry name" value="Ribosomal_uS17_bact/chlr"/>
</dbReference>
<dbReference type="NCBIfam" id="NF004123">
    <property type="entry name" value="PRK05610.1"/>
    <property type="match status" value="1"/>
</dbReference>
<dbReference type="NCBIfam" id="TIGR03635">
    <property type="entry name" value="uS17_bact"/>
    <property type="match status" value="1"/>
</dbReference>
<dbReference type="PANTHER" id="PTHR10744">
    <property type="entry name" value="40S RIBOSOMAL PROTEIN S11 FAMILY MEMBER"/>
    <property type="match status" value="1"/>
</dbReference>
<dbReference type="PANTHER" id="PTHR10744:SF1">
    <property type="entry name" value="SMALL RIBOSOMAL SUBUNIT PROTEIN US17M"/>
    <property type="match status" value="1"/>
</dbReference>
<dbReference type="Pfam" id="PF00366">
    <property type="entry name" value="Ribosomal_S17"/>
    <property type="match status" value="1"/>
</dbReference>
<dbReference type="PRINTS" id="PR00973">
    <property type="entry name" value="RIBOSOMALS17"/>
</dbReference>
<dbReference type="SUPFAM" id="SSF50249">
    <property type="entry name" value="Nucleic acid-binding proteins"/>
    <property type="match status" value="1"/>
</dbReference>
<accession>A6W383</accession>
<sequence length="86" mass="9751">MAETKARIATGKVVSDKMDKTITVLVERTEKHPLYGKFIRRSTKLHAHDENNECQIGDLVKVVETRPYSKSKTWKLVQVVEKAAAV</sequence>
<name>RS17_MARMS</name>
<feature type="chain" id="PRO_1000086843" description="Small ribosomal subunit protein uS17">
    <location>
        <begin position="1"/>
        <end position="86"/>
    </location>
</feature>
<gene>
    <name evidence="1" type="primary">rpsQ</name>
    <name type="ordered locus">Mmwyl1_4267</name>
</gene>
<protein>
    <recommendedName>
        <fullName evidence="1">Small ribosomal subunit protein uS17</fullName>
    </recommendedName>
    <alternativeName>
        <fullName evidence="2">30S ribosomal protein S17</fullName>
    </alternativeName>
</protein>
<comment type="function">
    <text evidence="1">One of the primary rRNA binding proteins, it binds specifically to the 5'-end of 16S ribosomal RNA.</text>
</comment>
<comment type="subunit">
    <text evidence="1">Part of the 30S ribosomal subunit.</text>
</comment>
<comment type="similarity">
    <text evidence="1">Belongs to the universal ribosomal protein uS17 family.</text>
</comment>
<keyword id="KW-0687">Ribonucleoprotein</keyword>
<keyword id="KW-0689">Ribosomal protein</keyword>
<keyword id="KW-0694">RNA-binding</keyword>
<keyword id="KW-0699">rRNA-binding</keyword>
<proteinExistence type="inferred from homology"/>
<organism>
    <name type="scientific">Marinomonas sp. (strain MWYL1)</name>
    <dbReference type="NCBI Taxonomy" id="400668"/>
    <lineage>
        <taxon>Bacteria</taxon>
        <taxon>Pseudomonadati</taxon>
        <taxon>Pseudomonadota</taxon>
        <taxon>Gammaproteobacteria</taxon>
        <taxon>Oceanospirillales</taxon>
        <taxon>Oceanospirillaceae</taxon>
        <taxon>Marinomonas</taxon>
    </lineage>
</organism>
<evidence type="ECO:0000255" key="1">
    <source>
        <dbReference type="HAMAP-Rule" id="MF_01345"/>
    </source>
</evidence>
<evidence type="ECO:0000305" key="2"/>
<reference key="1">
    <citation type="submission" date="2007-06" db="EMBL/GenBank/DDBJ databases">
        <title>Complete sequence of Marinomonas sp. MWYL1.</title>
        <authorList>
            <consortium name="US DOE Joint Genome Institute"/>
            <person name="Copeland A."/>
            <person name="Lucas S."/>
            <person name="Lapidus A."/>
            <person name="Barry K."/>
            <person name="Glavina del Rio T."/>
            <person name="Dalin E."/>
            <person name="Tice H."/>
            <person name="Pitluck S."/>
            <person name="Kiss H."/>
            <person name="Brettin T."/>
            <person name="Bruce D."/>
            <person name="Detter J.C."/>
            <person name="Han C."/>
            <person name="Schmutz J."/>
            <person name="Larimer F."/>
            <person name="Land M."/>
            <person name="Hauser L."/>
            <person name="Kyrpides N."/>
            <person name="Kim E."/>
            <person name="Johnston A.W.B."/>
            <person name="Todd J.D."/>
            <person name="Rogers R."/>
            <person name="Wexler M."/>
            <person name="Bond P.L."/>
            <person name="Li Y."/>
            <person name="Richardson P."/>
        </authorList>
    </citation>
    <scope>NUCLEOTIDE SEQUENCE [LARGE SCALE GENOMIC DNA]</scope>
    <source>
        <strain>MWYL1</strain>
    </source>
</reference>